<keyword id="KW-0002">3D-structure</keyword>
<keyword id="KW-1185">Reference proteome</keyword>
<keyword id="KW-0732">Signal</keyword>
<reference key="1">
    <citation type="journal article" date="1997" name="Science">
        <title>The complete genome sequence of Escherichia coli K-12.</title>
        <authorList>
            <person name="Blattner F.R."/>
            <person name="Plunkett G. III"/>
            <person name="Bloch C.A."/>
            <person name="Perna N.T."/>
            <person name="Burland V."/>
            <person name="Riley M."/>
            <person name="Collado-Vides J."/>
            <person name="Glasner J.D."/>
            <person name="Rode C.K."/>
            <person name="Mayhew G.F."/>
            <person name="Gregor J."/>
            <person name="Davis N.W."/>
            <person name="Kirkpatrick H.A."/>
            <person name="Goeden M.A."/>
            <person name="Rose D.J."/>
            <person name="Mau B."/>
            <person name="Shao Y."/>
        </authorList>
    </citation>
    <scope>NUCLEOTIDE SEQUENCE [LARGE SCALE GENOMIC DNA]</scope>
    <source>
        <strain>K12 / MG1655 / ATCC 47076</strain>
    </source>
</reference>
<reference key="2">
    <citation type="journal article" date="2006" name="Mol. Syst. Biol.">
        <title>Highly accurate genome sequences of Escherichia coli K-12 strains MG1655 and W3110.</title>
        <authorList>
            <person name="Hayashi K."/>
            <person name="Morooka N."/>
            <person name="Yamamoto Y."/>
            <person name="Fujita K."/>
            <person name="Isono K."/>
            <person name="Choi S."/>
            <person name="Ohtsubo E."/>
            <person name="Baba T."/>
            <person name="Wanner B.L."/>
            <person name="Mori H."/>
            <person name="Horiuchi T."/>
        </authorList>
    </citation>
    <scope>NUCLEOTIDE SEQUENCE [LARGE SCALE GENOMIC DNA]</scope>
    <source>
        <strain>K12 / W3110 / ATCC 27325 / DSM 5911</strain>
    </source>
</reference>
<reference key="3">
    <citation type="submission" date="1993-10" db="EMBL/GenBank/DDBJ databases">
        <title>Automated multiplex sequencing of the E.coli genome.</title>
        <authorList>
            <person name="Richterich P."/>
            <person name="Lakey N."/>
            <person name="Gryan G."/>
            <person name="Jaehn L."/>
            <person name="Mintz L."/>
            <person name="Robison K."/>
            <person name="Church G.M."/>
        </authorList>
    </citation>
    <scope>NUCLEOTIDE SEQUENCE [LARGE SCALE GENOMIC DNA] OF 196-604</scope>
    <source>
        <strain>K12 / BHB2600</strain>
    </source>
</reference>
<reference key="4">
    <citation type="journal article" date="1996" name="DNA Res.">
        <title>A 460-kb DNA sequence of the Escherichia coli K-12 genome corresponding to the 40.1-50.0 min region on the linkage map.</title>
        <authorList>
            <person name="Itoh T."/>
            <person name="Aiba H."/>
            <person name="Baba T."/>
            <person name="Fujita K."/>
            <person name="Hayashi K."/>
            <person name="Inada T."/>
            <person name="Isono K."/>
            <person name="Kasai H."/>
            <person name="Kimura S."/>
            <person name="Kitakawa M."/>
            <person name="Kitagawa M."/>
            <person name="Makino K."/>
            <person name="Miki T."/>
            <person name="Mizobuchi K."/>
            <person name="Mori H."/>
            <person name="Mori T."/>
            <person name="Motomura K."/>
            <person name="Nakade S."/>
            <person name="Nakamura Y."/>
            <person name="Nashimoto H."/>
            <person name="Nishio Y."/>
            <person name="Oshima T."/>
            <person name="Saito N."/>
            <person name="Sampei G."/>
            <person name="Seki Y."/>
            <person name="Sivasundaram S."/>
            <person name="Tagami H."/>
            <person name="Takeda J."/>
            <person name="Takemoto K."/>
            <person name="Wada C."/>
            <person name="Yamamoto Y."/>
            <person name="Horiuchi T."/>
        </authorList>
    </citation>
    <scope>NUCLEOTIDE SEQUENCE [LARGE SCALE GENOMIC DNA] OF 193-604</scope>
    <source>
        <strain>K12 / W3110 / ATCC 27325 / DSM 5911</strain>
    </source>
</reference>
<accession>P33913</accession>
<accession>P76447</accession>
<comment type="similarity">
    <text evidence="2">To H.influenzae HbpA.</text>
</comment>
<evidence type="ECO:0000255" key="1"/>
<evidence type="ECO:0000305" key="2"/>
<evidence type="ECO:0007829" key="3">
    <source>
        <dbReference type="PDB" id="7ATR"/>
    </source>
</evidence>
<sequence length="604" mass="69669">MIVRILLLFIALFTFGVQAQAIKESYAFAVLGEPRYAFNFNHFDYVNPAAPKGGQITLSALGTFDNFNRYALRGNPGARTEQLYDTLFTTSDDEPGSYYPLIAESARYADDYSWVEVAINPRARFHDGSPITARDVEFTFQKFMTEGVPQFRLVYKGTTVKAIAPLTVRIELAKPGKEDMLSLFSLPVFPEKYWKDHKLSDPLATPPLASGPYRVTSWKMGQNIVYSRVKDYWAANLPVNRGRWNFDTIRYDYYLDDNVAFEAFKAGAFDLRMENDAKNWATRYTGKNFDKKYIIKDEQKNESAQDTRWLAFNIQRPVFSDRRVREAITLAFDFEWMNKALFYNAWSRTNSYFQNTEYAARNYPDAAELVLLAPMKKDLPSEVFTQIYQPPVSKGDGYDRDNLLKADKLLNEAGWVLKGQQRVNATTGQPLSFELLLPASSNSQWVLPFQHSLQRLGINMDIRKVDNSQITNRMRSRDYDMMPRVWRAMPWPSSDLQISWSSEYINSTYNAPGVQSPVIDSLINQIIAAQGNKEKLLPLGRALDRVLTWNYYMLPMWYMAEDRLAWWDKFSQPAVRPIYSLGIDTWWYDVNKAAKLPSASKQGE</sequence>
<feature type="signal peptide" evidence="1">
    <location>
        <begin position="1"/>
        <end position="19"/>
    </location>
</feature>
<feature type="chain" id="PRO_0000013874" description="Uncharacterized protein YejA">
    <location>
        <begin position="20"/>
        <end position="604"/>
    </location>
</feature>
<feature type="sequence conflict" description="In Ref. 3; AAA16375." evidence="2" ref="3">
    <original>W</original>
    <variation>G</variation>
    <location>
        <position position="415"/>
    </location>
</feature>
<feature type="strand" evidence="3">
    <location>
        <begin position="22"/>
        <end position="26"/>
    </location>
</feature>
<feature type="strand" evidence="3">
    <location>
        <begin position="28"/>
        <end position="32"/>
    </location>
</feature>
<feature type="helix" evidence="3">
    <location>
        <begin position="33"/>
        <end position="36"/>
    </location>
</feature>
<feature type="strand" evidence="3">
    <location>
        <begin position="55"/>
        <end position="62"/>
    </location>
</feature>
<feature type="strand" evidence="3">
    <location>
        <begin position="71"/>
        <end position="74"/>
    </location>
</feature>
<feature type="helix" evidence="3">
    <location>
        <begin position="80"/>
        <end position="82"/>
    </location>
</feature>
<feature type="strand" evidence="3">
    <location>
        <begin position="87"/>
        <end position="90"/>
    </location>
</feature>
<feature type="strand" evidence="3">
    <location>
        <begin position="92"/>
        <end position="109"/>
    </location>
</feature>
<feature type="strand" evidence="3">
    <location>
        <begin position="112"/>
        <end position="119"/>
    </location>
</feature>
<feature type="helix" evidence="3">
    <location>
        <begin position="133"/>
        <end position="146"/>
    </location>
</feature>
<feature type="helix" evidence="3">
    <location>
        <begin position="150"/>
        <end position="154"/>
    </location>
</feature>
<feature type="turn" evidence="3">
    <location>
        <begin position="155"/>
        <end position="157"/>
    </location>
</feature>
<feature type="strand" evidence="3">
    <location>
        <begin position="159"/>
        <end position="164"/>
    </location>
</feature>
<feature type="strand" evidence="3">
    <location>
        <begin position="167"/>
        <end position="171"/>
    </location>
</feature>
<feature type="helix" evidence="3">
    <location>
        <begin position="177"/>
        <end position="183"/>
    </location>
</feature>
<feature type="helix" evidence="3">
    <location>
        <begin position="191"/>
        <end position="194"/>
    </location>
</feature>
<feature type="strand" evidence="3">
    <location>
        <begin position="211"/>
        <end position="219"/>
    </location>
</feature>
<feature type="turn" evidence="3">
    <location>
        <begin position="220"/>
        <end position="222"/>
    </location>
</feature>
<feature type="strand" evidence="3">
    <location>
        <begin position="223"/>
        <end position="228"/>
    </location>
</feature>
<feature type="turn" evidence="3">
    <location>
        <begin position="233"/>
        <end position="236"/>
    </location>
</feature>
<feature type="helix" evidence="3">
    <location>
        <begin position="238"/>
        <end position="240"/>
    </location>
</feature>
<feature type="strand" evidence="3">
    <location>
        <begin position="247"/>
        <end position="256"/>
    </location>
</feature>
<feature type="helix" evidence="3">
    <location>
        <begin position="257"/>
        <end position="265"/>
    </location>
</feature>
<feature type="strand" evidence="3">
    <location>
        <begin position="268"/>
        <end position="273"/>
    </location>
</feature>
<feature type="helix" evidence="3">
    <location>
        <begin position="277"/>
        <end position="282"/>
    </location>
</feature>
<feature type="helix" evidence="3">
    <location>
        <begin position="287"/>
        <end position="290"/>
    </location>
</feature>
<feature type="strand" evidence="3">
    <location>
        <begin position="294"/>
        <end position="300"/>
    </location>
</feature>
<feature type="strand" evidence="3">
    <location>
        <begin position="307"/>
        <end position="312"/>
    </location>
</feature>
<feature type="helix" evidence="3">
    <location>
        <begin position="317"/>
        <end position="319"/>
    </location>
</feature>
<feature type="helix" evidence="3">
    <location>
        <begin position="322"/>
        <end position="330"/>
    </location>
</feature>
<feature type="helix" evidence="3">
    <location>
        <begin position="334"/>
        <end position="340"/>
    </location>
</feature>
<feature type="turn" evidence="3">
    <location>
        <begin position="352"/>
        <end position="355"/>
    </location>
</feature>
<feature type="helix" evidence="3">
    <location>
        <begin position="366"/>
        <end position="372"/>
    </location>
</feature>
<feature type="helix" evidence="3">
    <location>
        <begin position="373"/>
        <end position="378"/>
    </location>
</feature>
<feature type="helix" evidence="3">
    <location>
        <begin position="382"/>
        <end position="385"/>
    </location>
</feature>
<feature type="strand" evidence="3">
    <location>
        <begin position="395"/>
        <end position="397"/>
    </location>
</feature>
<feature type="helix" evidence="3">
    <location>
        <begin position="400"/>
        <end position="412"/>
    </location>
</feature>
<feature type="strand" evidence="3">
    <location>
        <begin position="415"/>
        <end position="418"/>
    </location>
</feature>
<feature type="strand" evidence="3">
    <location>
        <begin position="421"/>
        <end position="424"/>
    </location>
</feature>
<feature type="turn" evidence="3">
    <location>
        <begin position="425"/>
        <end position="427"/>
    </location>
</feature>
<feature type="strand" evidence="3">
    <location>
        <begin position="432"/>
        <end position="438"/>
    </location>
</feature>
<feature type="helix" evidence="3">
    <location>
        <begin position="446"/>
        <end position="455"/>
    </location>
</feature>
<feature type="strand" evidence="3">
    <location>
        <begin position="459"/>
        <end position="465"/>
    </location>
</feature>
<feature type="helix" evidence="3">
    <location>
        <begin position="467"/>
        <end position="476"/>
    </location>
</feature>
<feature type="strand" evidence="3">
    <location>
        <begin position="480"/>
        <end position="486"/>
    </location>
</feature>
<feature type="helix" evidence="3">
    <location>
        <begin position="496"/>
        <end position="500"/>
    </location>
</feature>
<feature type="helix" evidence="3">
    <location>
        <begin position="502"/>
        <end position="504"/>
    </location>
</feature>
<feature type="helix" evidence="3">
    <location>
        <begin position="517"/>
        <end position="528"/>
    </location>
</feature>
<feature type="turn" evidence="3">
    <location>
        <begin position="529"/>
        <end position="531"/>
    </location>
</feature>
<feature type="helix" evidence="3">
    <location>
        <begin position="533"/>
        <end position="549"/>
    </location>
</feature>
<feature type="strand" evidence="3">
    <location>
        <begin position="552"/>
        <end position="555"/>
    </location>
</feature>
<feature type="strand" evidence="3">
    <location>
        <begin position="560"/>
        <end position="568"/>
    </location>
</feature>
<feature type="strand" evidence="3">
    <location>
        <begin position="578"/>
        <end position="580"/>
    </location>
</feature>
<feature type="helix" evidence="3">
    <location>
        <begin position="583"/>
        <end position="585"/>
    </location>
</feature>
<feature type="helix" evidence="3">
    <location>
        <begin position="590"/>
        <end position="593"/>
    </location>
</feature>
<gene>
    <name type="primary">yejA</name>
    <name type="ordered locus">b2177</name>
    <name type="ordered locus">JW2165</name>
</gene>
<protein>
    <recommendedName>
        <fullName>Uncharacterized protein YejA</fullName>
    </recommendedName>
</protein>
<organism>
    <name type="scientific">Escherichia coli (strain K12)</name>
    <dbReference type="NCBI Taxonomy" id="83333"/>
    <lineage>
        <taxon>Bacteria</taxon>
        <taxon>Pseudomonadati</taxon>
        <taxon>Pseudomonadota</taxon>
        <taxon>Gammaproteobacteria</taxon>
        <taxon>Enterobacterales</taxon>
        <taxon>Enterobacteriaceae</taxon>
        <taxon>Escherichia</taxon>
    </lineage>
</organism>
<dbReference type="EMBL" id="U00096">
    <property type="protein sequence ID" value="AAC75238.2"/>
    <property type="molecule type" value="Genomic_DNA"/>
</dbReference>
<dbReference type="EMBL" id="AP009048">
    <property type="protein sequence ID" value="BAA15985.2"/>
    <property type="molecule type" value="Genomic_DNA"/>
</dbReference>
<dbReference type="EMBL" id="U00008">
    <property type="protein sequence ID" value="AAA16375.1"/>
    <property type="molecule type" value="Genomic_DNA"/>
</dbReference>
<dbReference type="PIR" id="H64986">
    <property type="entry name" value="H64986"/>
</dbReference>
<dbReference type="RefSeq" id="NP_416682.4">
    <property type="nucleotide sequence ID" value="NC_000913.3"/>
</dbReference>
<dbReference type="RefSeq" id="WP_000637046.1">
    <property type="nucleotide sequence ID" value="NZ_LN832404.1"/>
</dbReference>
<dbReference type="PDB" id="7ATR">
    <property type="method" value="X-ray"/>
    <property type="resolution" value="1.55 A"/>
    <property type="chains" value="A=20-598"/>
</dbReference>
<dbReference type="PDB" id="7Z6F">
    <property type="method" value="X-ray"/>
    <property type="resolution" value="1.65 A"/>
    <property type="chains" value="E=20-604"/>
</dbReference>
<dbReference type="PDB" id="8FSQ">
    <property type="method" value="X-ray"/>
    <property type="resolution" value="1.76 A"/>
    <property type="chains" value="A=20-604"/>
</dbReference>
<dbReference type="PDB" id="8FSR">
    <property type="method" value="X-ray"/>
    <property type="resolution" value="1.78 A"/>
    <property type="chains" value="A=20-604"/>
</dbReference>
<dbReference type="PDB" id="8FSS">
    <property type="method" value="X-ray"/>
    <property type="resolution" value="2.00 A"/>
    <property type="chains" value="A=20-604"/>
</dbReference>
<dbReference type="PDBsum" id="7ATR"/>
<dbReference type="PDBsum" id="7Z6F"/>
<dbReference type="PDBsum" id="8FSQ"/>
<dbReference type="PDBsum" id="8FSR"/>
<dbReference type="PDBsum" id="8FSS"/>
<dbReference type="SMR" id="P33913"/>
<dbReference type="BioGRID" id="4261094">
    <property type="interactions" value="18"/>
</dbReference>
<dbReference type="ComplexPortal" id="CPX-4362">
    <property type="entry name" value="Peptide ABC transporter complex"/>
</dbReference>
<dbReference type="FunCoup" id="P33913">
    <property type="interactions" value="186"/>
</dbReference>
<dbReference type="IntAct" id="P33913">
    <property type="interactions" value="2"/>
</dbReference>
<dbReference type="STRING" id="511145.b2177"/>
<dbReference type="TCDB" id="3.A.1.5.21">
    <property type="family name" value="the atp-binding cassette (abc) superfamily"/>
</dbReference>
<dbReference type="jPOST" id="P33913"/>
<dbReference type="PaxDb" id="511145-b2177"/>
<dbReference type="EnsemblBacteria" id="AAC75238">
    <property type="protein sequence ID" value="AAC75238"/>
    <property type="gene ID" value="b2177"/>
</dbReference>
<dbReference type="GeneID" id="946675"/>
<dbReference type="KEGG" id="ecj:JW2165"/>
<dbReference type="KEGG" id="eco:b2177"/>
<dbReference type="KEGG" id="ecoc:C3026_12180"/>
<dbReference type="PATRIC" id="fig|1411691.4.peg.59"/>
<dbReference type="EchoBASE" id="EB1972"/>
<dbReference type="eggNOG" id="COG4166">
    <property type="taxonomic scope" value="Bacteria"/>
</dbReference>
<dbReference type="HOGENOM" id="CLU_023171_0_0_6"/>
<dbReference type="InParanoid" id="P33913"/>
<dbReference type="OMA" id="VLPKHWW"/>
<dbReference type="OrthoDB" id="9803988at2"/>
<dbReference type="PhylomeDB" id="P33913"/>
<dbReference type="BioCyc" id="EcoCyc:YEJA-MONOMER"/>
<dbReference type="BioCyc" id="MetaCyc:YEJA-MONOMER"/>
<dbReference type="PRO" id="PR:P33913"/>
<dbReference type="Proteomes" id="UP000000625">
    <property type="component" value="Chromosome"/>
</dbReference>
<dbReference type="GO" id="GO:0055052">
    <property type="term" value="C:ATP-binding cassette (ABC) transporter complex, substrate-binding subunit-containing"/>
    <property type="evidence" value="ECO:0000303"/>
    <property type="project" value="ComplexPortal"/>
</dbReference>
<dbReference type="GO" id="GO:0016020">
    <property type="term" value="C:membrane"/>
    <property type="evidence" value="ECO:0000303"/>
    <property type="project" value="ComplexPortal"/>
</dbReference>
<dbReference type="GO" id="GO:0030288">
    <property type="term" value="C:outer membrane-bounded periplasmic space"/>
    <property type="evidence" value="ECO:0000314"/>
    <property type="project" value="EcoCyc"/>
</dbReference>
<dbReference type="GO" id="GO:0015421">
    <property type="term" value="F:ABC-type oligopeptide transporter activity"/>
    <property type="evidence" value="ECO:0000315"/>
    <property type="project" value="EcoCyc"/>
</dbReference>
<dbReference type="GO" id="GO:1904680">
    <property type="term" value="F:peptide transmembrane transporter activity"/>
    <property type="evidence" value="ECO:0000318"/>
    <property type="project" value="GO_Central"/>
</dbReference>
<dbReference type="GO" id="GO:0042884">
    <property type="term" value="P:microcin transport"/>
    <property type="evidence" value="ECO:0000314"/>
    <property type="project" value="ComplexPortal"/>
</dbReference>
<dbReference type="GO" id="GO:0006857">
    <property type="term" value="P:oligopeptide transport"/>
    <property type="evidence" value="ECO:0000314"/>
    <property type="project" value="EcoCyc"/>
</dbReference>
<dbReference type="GO" id="GO:0015833">
    <property type="term" value="P:peptide transport"/>
    <property type="evidence" value="ECO:0000318"/>
    <property type="project" value="GO_Central"/>
</dbReference>
<dbReference type="CDD" id="cd08497">
    <property type="entry name" value="MbnE-like"/>
    <property type="match status" value="1"/>
</dbReference>
<dbReference type="FunFam" id="3.10.105.10:FF:000005">
    <property type="entry name" value="ABC transporter substrate-binding protein"/>
    <property type="match status" value="1"/>
</dbReference>
<dbReference type="FunFam" id="3.40.190.10:FF:000104">
    <property type="entry name" value="Peptide ABC transporter substrate-binding protein"/>
    <property type="match status" value="1"/>
</dbReference>
<dbReference type="Gene3D" id="3.10.105.10">
    <property type="entry name" value="Dipeptide-binding Protein, Domain 3"/>
    <property type="match status" value="1"/>
</dbReference>
<dbReference type="Gene3D" id="3.40.190.10">
    <property type="entry name" value="Periplasmic binding protein-like II"/>
    <property type="match status" value="1"/>
</dbReference>
<dbReference type="InterPro" id="IPR030678">
    <property type="entry name" value="Peptide/Ni-bd"/>
</dbReference>
<dbReference type="InterPro" id="IPR039424">
    <property type="entry name" value="SBP_5"/>
</dbReference>
<dbReference type="InterPro" id="IPR000914">
    <property type="entry name" value="SBP_5_dom"/>
</dbReference>
<dbReference type="PANTHER" id="PTHR30290:SF64">
    <property type="entry name" value="ABC TRANSPORTER PERIPLASMIC BINDING PROTEIN"/>
    <property type="match status" value="1"/>
</dbReference>
<dbReference type="PANTHER" id="PTHR30290">
    <property type="entry name" value="PERIPLASMIC BINDING COMPONENT OF ABC TRANSPORTER"/>
    <property type="match status" value="1"/>
</dbReference>
<dbReference type="Pfam" id="PF00496">
    <property type="entry name" value="SBP_bac_5"/>
    <property type="match status" value="1"/>
</dbReference>
<dbReference type="PIRSF" id="PIRSF002741">
    <property type="entry name" value="MppA"/>
    <property type="match status" value="1"/>
</dbReference>
<dbReference type="SUPFAM" id="SSF53850">
    <property type="entry name" value="Periplasmic binding protein-like II"/>
    <property type="match status" value="1"/>
</dbReference>
<proteinExistence type="evidence at protein level"/>
<name>YEJA_ECOLI</name>